<gene>
    <name evidence="12" type="primary">THCAS</name>
</gene>
<name>THCAS_CANSA</name>
<comment type="function">
    <text evidence="4 7 9">Oxidoreductase involved in the biosynthesis of cannabinoids-related terpenophenolic natural products, which have pharmacological activity (PubMed:15190053, PubMed:17669365, Ref.4). Catalyzes the oxidative cyclization of the monoterpene moiety in cannabigerolic acid (CBGA), producing delta(9)-tetrahydrocannabinolate (THCA), the major cannabioid in drug-type Cannabis plants (PubMed:15190053, PubMed:17669365, Ref.4). Can also use cannabinerolic acid as substrate, but not cannabigerol or cannabinerol (PubMed:15190053, PubMed:17669365, Ref.4).</text>
</comment>
<comment type="catalytic activity">
    <reaction evidence="4 7 9">
        <text>cannabigerolate + O2 = Delta(9)-tetrahydrocannabinolate + H2O2</text>
        <dbReference type="Rhea" id="RHEA:34135"/>
        <dbReference type="ChEBI" id="CHEBI:15379"/>
        <dbReference type="ChEBI" id="CHEBI:16240"/>
        <dbReference type="ChEBI" id="CHEBI:66962"/>
        <dbReference type="ChEBI" id="CHEBI:66963"/>
        <dbReference type="EC" id="1.21.3.7"/>
    </reaction>
    <physiologicalReaction direction="left-to-right" evidence="4 7 9">
        <dbReference type="Rhea" id="RHEA:34136"/>
    </physiologicalReaction>
</comment>
<comment type="cofactor">
    <cofactor evidence="8">
        <name>FAD</name>
        <dbReference type="ChEBI" id="CHEBI:57692"/>
    </cofactor>
    <text evidence="8">Binds 1 FAD per subunit in a bicovalent manner.</text>
</comment>
<comment type="activity regulation">
    <text evidence="9">Inhibited by Hg(2+).</text>
</comment>
<comment type="biophysicochemical properties">
    <kinetics>
        <KM evidence="4 9">134 uM for cannabigerolic acid</KM>
        <KM evidence="4 9">254 uM for cannabinerolic acid</KM>
        <Vmax evidence="4 9">2.68 nmol/sec/mg enzyme with cannabigerolic acid as substrate</Vmax>
        <Vmax evidence="4 9">0.37 nmol/sec/mg enzyme with cannabinerolic acid as substrate</Vmax>
        <text>kcat is 0.30 sec(-1) for cannabigerolate.</text>
    </kinetics>
    <phDependence>
        <text evidence="4 9">Optimum pH is 5.5-6.0.</text>
    </phDependence>
</comment>
<comment type="pathway">
    <text evidence="11">Secondary metabolite biosynthesis; terpenoid biosynthesis.</text>
</comment>
<comment type="subunit">
    <text evidence="8 9">Monomer.</text>
</comment>
<comment type="subcellular location">
    <subcellularLocation>
        <location evidence="5">Secreted</location>
    </subcellularLocation>
    <subcellularLocation>
        <location evidence="5">Secreted</location>
        <location evidence="5">Extracellular space</location>
        <location evidence="5">Apoplast</location>
    </subcellularLocation>
    <text evidence="5">Sorted from the secretory cells into the storage cavity of glandular trichomes.</text>
</comment>
<comment type="tissue specificity">
    <text evidence="5">Expressed in the secretory cells of glandular trichomes.</text>
</comment>
<comment type="PTM">
    <text evidence="4 7">Glycosylated when produced in a heterologous system. The deglycosylated THCA synthase has more catalytic activity than the glycosylated form.</text>
</comment>
<comment type="PTM">
    <text evidence="8">The FAD cofactor is bound via a bicovalent 6-S-cysteinyl, 8alpha-N1-histidyl FAD linkage.</text>
</comment>
<comment type="polymorphism">
    <text evidence="6">Several isoforms of the active tetrahydrocannabinolic acid synthase found in the 'drug-type' cannabis plants exist due to polymorphism.</text>
</comment>
<comment type="miscellaneous">
    <text>THCA synthase might contribute to the self-defense of Cannabis plants by producing both THCA and hydrogen peroxide, but since these reaction products are toxic to the plant itself, THCA synthase must be secreted from secretory cells into the storage cavity to avoid cellular damage.</text>
</comment>
<comment type="similarity">
    <text evidence="13">Belongs to the oxygen-dependent FAD-linked oxidoreductase family.</text>
</comment>
<reference key="1">
    <citation type="journal article" date="2004" name="J. Biol. Chem.">
        <title>The gene controlling marijuana psychoactivity: molecular cloning and heterologous expression of Delta1-tetrahydrocannabinolic acid synthase from Cannabis sativa L.</title>
        <authorList>
            <person name="Sirikantaramas S."/>
            <person name="Morimoto S."/>
            <person name="Shoyama Y."/>
            <person name="Ishikawa Y."/>
            <person name="Wada Y."/>
            <person name="Shoyama Y."/>
            <person name="Taura F."/>
        </authorList>
    </citation>
    <scope>NUCLEOTIDE SEQUENCE [MRNA]</scope>
    <scope>PROTEIN SEQUENCE OF 29-52; 330-339; 426-437 AND 441-455</scope>
    <scope>FUNCTION</scope>
    <scope>CATALYTIC ACTIVITY</scope>
    <scope>BIOPHYSICOCHEMICAL PROPERTIES</scope>
    <scope>GLYCOSYLATION</scope>
    <scope>MUTAGENESIS OF HIS-92; ARG-108; ARG-110; HIS-114 AND HIS-208</scope>
</reference>
<reference key="2">
    <citation type="journal article" date="2005" name="Plant Cell Physiol.">
        <title>Tetrahydrocannabinolic acid synthase, the enzyme controlling marijuana psychoactivity, is secreted into the storage cavity of the glandular trichomes.</title>
        <authorList>
            <person name="Sirikantaramas S."/>
            <person name="Taura F."/>
            <person name="Tanaka Y."/>
            <person name="Ishikawa Y."/>
            <person name="Morimoto S."/>
            <person name="Shoyama Y."/>
        </authorList>
    </citation>
    <scope>TISSUE SPECIFICITY</scope>
    <scope>SUBCELLULAR LOCATION</scope>
</reference>
<reference key="3">
    <citation type="journal article" date="2006" name="Forensic Sci. Int.">
        <title>DNA polymorphisms in the tetrahydrocannabinolic acid (THCA) synthase gene in 'drug-type' and 'fiber-type' Cannabis sativa L.</title>
        <authorList>
            <person name="Kojoma M."/>
            <person name="Seki H."/>
            <person name="Yoshida S."/>
            <person name="Muranaka T."/>
        </authorList>
    </citation>
    <scope>NUCLEOTIDE SEQUENCE [GENOMIC DNA]</scope>
    <scope>POLYMORPHISM</scope>
    <scope>VARIANT LEU-63</scope>
    <source>
        <strain>001</strain>
        <strain>010</strain>
        <strain>013</strain>
        <strain>020</strain>
        <strain>053</strain>
        <strain>054</strain>
        <strain>069</strain>
    </source>
</reference>
<reference key="4">
    <citation type="journal article" date="1995" name="J. Am. Chem. Soc.">
        <title>First direct evidence for the mechanism of delta(1)-tetra hydrocannabinolic acid biosynthesis.</title>
        <authorList>
            <person name="Taura F."/>
            <person name="Morimoto S."/>
            <person name="Shoyama Y."/>
        </authorList>
    </citation>
    <scope>PROTEIN SEQUENCE OF 29-44</scope>
    <scope>FUNCTION</scope>
    <scope>CATALYTIC ACTIVITY</scope>
    <scope>SUBUNIT</scope>
    <scope>BIOPHYSICOCHEMICAL PROPERTIES</scope>
    <scope>SUBSTRATE SPECIFICITY</scope>
    <scope>ACTIVITY REGULATION</scope>
</reference>
<reference key="5">
    <citation type="journal article" date="2007" name="Biochem. Biophys. Res. Commun.">
        <title>Production of Delta(1)-tetrahydrocannabinolic acid by the biosynthetic enzyme secreted from transgenic Pichia pastoris.</title>
        <authorList>
            <person name="Taura F."/>
            <person name="Dono E."/>
            <person name="Sirikantaramas S."/>
            <person name="Yoshimura K."/>
            <person name="Shoyama Y."/>
            <person name="Morimoto S."/>
        </authorList>
    </citation>
    <scope>FUNCTION</scope>
    <scope>CATALYTIC ACTIVITY</scope>
    <scope>GLYCOSYLATION</scope>
</reference>
<reference key="6">
    <citation type="journal article" date="2007" name="Chem. Biodivers.">
        <title>Phytocannabinoids in Cannabis sativa: recent studies on biosynthetic enzymes.</title>
        <authorList>
            <person name="Taura F."/>
            <person name="Sirikantaramas S."/>
            <person name="Shoyama Y."/>
            <person name="Shoyama Y."/>
            <person name="Morimoto S."/>
        </authorList>
    </citation>
    <scope>REVIEW</scope>
</reference>
<reference key="7">
    <citation type="journal article" date="2019" name="Nat. Prod. Rep.">
        <title>Non-volatile natural products in plant glandular trichomes: chemistry, biological activities and biosynthesis.</title>
        <authorList>
            <person name="Liu Y."/>
            <person name="Jing S.-X."/>
            <person name="Luo S.-H."/>
            <person name="Li S.-H."/>
        </authorList>
    </citation>
    <scope>PATHWAY</scope>
    <scope>REVIEW</scope>
</reference>
<reference key="8">
    <citation type="journal article" date="2012" name="J. Mol. Biol.">
        <title>Structure and function of delta(1)-tetrahydrocannabinolic acid (THCA) synthase, the enzyme controlling the psychoactivity of Cannabis sativa.</title>
        <authorList>
            <person name="Shoyama Y."/>
            <person name="Tamada T."/>
            <person name="Kurihara K."/>
            <person name="Takeuchi A."/>
            <person name="Taura F."/>
            <person name="Arai S."/>
            <person name="Blaber M."/>
            <person name="Shoyama Y."/>
            <person name="Morimoto S."/>
            <person name="Kuroki R."/>
        </authorList>
    </citation>
    <scope>X-RAY CRYSTALLOGRAPHY (2.75 ANGSTROMS) OF 28-545 IN COMPLEX WITH FAD</scope>
    <scope>MUTAGENESIS OF HIS-114; HIS-292; TYR-417; GLU-442 AND TYR-484</scope>
    <scope>GLYCOSYLATION AT ASN-65; ASN-89; ASN-168; ASN-329; ASN-467 AND ASN-499</scope>
    <scope>DISULFIDE BOND</scope>
</reference>
<accession>Q8GTB6</accession>
<accession>Q33DQ4</accession>
<accession>Q5NTX8</accession>
<organism>
    <name type="scientific">Cannabis sativa</name>
    <name type="common">Hemp</name>
    <name type="synonym">Marijuana</name>
    <dbReference type="NCBI Taxonomy" id="3483"/>
    <lineage>
        <taxon>Eukaryota</taxon>
        <taxon>Viridiplantae</taxon>
        <taxon>Streptophyta</taxon>
        <taxon>Embryophyta</taxon>
        <taxon>Tracheophyta</taxon>
        <taxon>Spermatophyta</taxon>
        <taxon>Magnoliopsida</taxon>
        <taxon>eudicotyledons</taxon>
        <taxon>Gunneridae</taxon>
        <taxon>Pentapetalae</taxon>
        <taxon>rosids</taxon>
        <taxon>fabids</taxon>
        <taxon>Rosales</taxon>
        <taxon>Cannabaceae</taxon>
        <taxon>Cannabis</taxon>
    </lineage>
</organism>
<proteinExistence type="evidence at protein level"/>
<feature type="signal peptide" evidence="4 9">
    <location>
        <begin position="1"/>
        <end position="28"/>
    </location>
</feature>
<feature type="chain" id="PRO_0000421142" description="Tetrahydrocannabinolic acid synthase">
    <location>
        <begin position="29"/>
        <end position="545"/>
    </location>
</feature>
<feature type="domain" description="FAD-binding PCMH-type" evidence="3">
    <location>
        <begin position="77"/>
        <end position="251"/>
    </location>
</feature>
<feature type="active site" description="Proton acceptor" evidence="14">
    <location>
        <position position="484"/>
    </location>
</feature>
<feature type="binding site" evidence="8 15">
    <location>
        <begin position="109"/>
        <end position="115"/>
    </location>
    <ligand>
        <name>FAD</name>
        <dbReference type="ChEBI" id="CHEBI:57692"/>
    </ligand>
</feature>
<feature type="binding site" evidence="8 15">
    <location>
        <position position="120"/>
    </location>
    <ligand>
        <name>FAD</name>
        <dbReference type="ChEBI" id="CHEBI:57692"/>
    </ligand>
</feature>
<feature type="binding site" evidence="8 15">
    <location>
        <position position="176"/>
    </location>
    <ligand>
        <name>FAD</name>
        <dbReference type="ChEBI" id="CHEBI:57692"/>
    </ligand>
</feature>
<feature type="binding site" evidence="8 15">
    <location>
        <begin position="180"/>
        <end position="184"/>
    </location>
    <ligand>
        <name>FAD</name>
        <dbReference type="ChEBI" id="CHEBI:57692"/>
    </ligand>
</feature>
<feature type="binding site" evidence="8 15">
    <location>
        <position position="190"/>
    </location>
    <ligand>
        <name>FAD</name>
        <dbReference type="ChEBI" id="CHEBI:57692"/>
    </ligand>
</feature>
<feature type="binding site" evidence="8 15">
    <location>
        <position position="236"/>
    </location>
    <ligand>
        <name>FAD</name>
        <dbReference type="ChEBI" id="CHEBI:57692"/>
    </ligand>
</feature>
<feature type="binding site" evidence="8 15">
    <location>
        <position position="241"/>
    </location>
    <ligand>
        <name>FAD</name>
        <dbReference type="ChEBI" id="CHEBI:57692"/>
    </ligand>
</feature>
<feature type="binding site" evidence="14">
    <location>
        <position position="292"/>
    </location>
    <ligand>
        <name>cannabigerolate</name>
        <dbReference type="ChEBI" id="CHEBI:66962"/>
    </ligand>
</feature>
<feature type="binding site" evidence="14">
    <location>
        <position position="417"/>
    </location>
    <ligand>
        <name>cannabigerolate</name>
        <dbReference type="ChEBI" id="CHEBI:66962"/>
    </ligand>
</feature>
<feature type="binding site" evidence="1">
    <location>
        <position position="442"/>
    </location>
    <ligand>
        <name>cannabigerolate</name>
        <dbReference type="ChEBI" id="CHEBI:66962"/>
    </ligand>
</feature>
<feature type="binding site" evidence="8 15">
    <location>
        <begin position="481"/>
        <end position="483"/>
    </location>
    <ligand>
        <name>FAD</name>
        <dbReference type="ChEBI" id="CHEBI:57692"/>
    </ligand>
</feature>
<feature type="glycosylation site" description="N-linked (GlcNAc...) asparagine" evidence="2 8 15">
    <location>
        <position position="65"/>
    </location>
</feature>
<feature type="glycosylation site" description="N-linked (GlcNAc...) asparagine" evidence="2 8 15">
    <location>
        <position position="89"/>
    </location>
</feature>
<feature type="glycosylation site" description="N-linked (GlcNAc...) asparagine" evidence="2 8 15">
    <location>
        <position position="168"/>
    </location>
</feature>
<feature type="glycosylation site" description="N-linked (GlcNAc...) asparagine" evidence="2">
    <location>
        <position position="297"/>
    </location>
</feature>
<feature type="glycosylation site" description="N-linked (GlcNAc...) asparagine" evidence="2">
    <location>
        <position position="305"/>
    </location>
</feature>
<feature type="glycosylation site" description="N-linked (GlcNAc...) asparagine" evidence="2 8 15">
    <location>
        <position position="329"/>
    </location>
</feature>
<feature type="glycosylation site" description="N-linked (GlcNAc...) asparagine" evidence="2 8 15">
    <location>
        <position position="467"/>
    </location>
</feature>
<feature type="glycosylation site" description="N-linked (GlcNAc...) asparagine" evidence="2 8 15">
    <location>
        <position position="499"/>
    </location>
</feature>
<feature type="disulfide bond" evidence="8 15">
    <location>
        <begin position="37"/>
        <end position="99"/>
    </location>
</feature>
<feature type="cross-link" description="6-(S-cysteinyl)-8alpha-(pros-histidyl)-FAD (His-Cys)" evidence="8">
    <location>
        <begin position="114"/>
        <end position="176"/>
    </location>
</feature>
<feature type="sequence variant" description="In strain: 001." evidence="6">
    <original>I</original>
    <variation>L</variation>
    <location>
        <position position="63"/>
    </location>
</feature>
<feature type="mutagenesis site" description="No effect." evidence="4">
    <original>H</original>
    <variation>A</variation>
    <location>
        <position position="92"/>
    </location>
</feature>
<feature type="mutagenesis site" description="Strongly reduced catalytic activity." evidence="4">
    <original>R</original>
    <variation>A</variation>
    <location>
        <position position="108"/>
    </location>
</feature>
<feature type="mutagenesis site" description="Strongly reduced catalytic activity." evidence="4">
    <original>R</original>
    <variation>A</variation>
    <location>
        <position position="110"/>
    </location>
</feature>
<feature type="mutagenesis site" description="Loss of FAD binding and loss of catalytic activity." evidence="4 8">
    <original>H</original>
    <variation>A</variation>
    <location>
        <position position="114"/>
    </location>
</feature>
<feature type="mutagenesis site" description="No effect." evidence="4">
    <original>H</original>
    <variation>A</variation>
    <location>
        <position position="208"/>
    </location>
</feature>
<feature type="mutagenesis site" description="Strongly reduced catalytic activity." evidence="8">
    <original>H</original>
    <variation>A</variation>
    <location>
        <position position="292"/>
    </location>
</feature>
<feature type="mutagenesis site" description="Reduced catalytic activity." evidence="8">
    <original>Y</original>
    <variation>F</variation>
    <location>
        <position position="417"/>
    </location>
</feature>
<feature type="mutagenesis site" description="Slightly reduced catalytic activity." evidence="8">
    <original>E</original>
    <variation>Q</variation>
    <location>
        <position position="442"/>
    </location>
</feature>
<feature type="mutagenesis site" description="Loss of catalytic activity." evidence="8">
    <original>Y</original>
    <variation>F</variation>
    <location>
        <position position="484"/>
    </location>
</feature>
<feature type="helix" evidence="16">
    <location>
        <begin position="30"/>
        <end position="41"/>
    </location>
</feature>
<feature type="helix" evidence="16">
    <location>
        <begin position="60"/>
        <end position="66"/>
    </location>
</feature>
<feature type="helix" evidence="16">
    <location>
        <begin position="71"/>
        <end position="73"/>
    </location>
</feature>
<feature type="strand" evidence="16">
    <location>
        <begin position="75"/>
        <end position="78"/>
    </location>
</feature>
<feature type="strand" evidence="16">
    <location>
        <begin position="82"/>
        <end position="85"/>
    </location>
</feature>
<feature type="helix" evidence="16">
    <location>
        <begin position="90"/>
        <end position="103"/>
    </location>
</feature>
<feature type="strand" evidence="16">
    <location>
        <begin position="106"/>
        <end position="112"/>
    </location>
</feature>
<feature type="turn" evidence="16">
    <location>
        <begin position="119"/>
        <end position="121"/>
    </location>
</feature>
<feature type="strand" evidence="16">
    <location>
        <begin position="124"/>
        <end position="131"/>
    </location>
</feature>
<feature type="strand" evidence="16">
    <location>
        <begin position="138"/>
        <end position="141"/>
    </location>
</feature>
<feature type="turn" evidence="16">
    <location>
        <begin position="142"/>
        <end position="145"/>
    </location>
</feature>
<feature type="strand" evidence="16">
    <location>
        <begin position="146"/>
        <end position="150"/>
    </location>
</feature>
<feature type="helix" evidence="16">
    <location>
        <begin position="155"/>
        <end position="165"/>
    </location>
</feature>
<feature type="helix" evidence="16">
    <location>
        <begin position="181"/>
        <end position="186"/>
    </location>
</feature>
<feature type="helix" evidence="16">
    <location>
        <begin position="194"/>
        <end position="197"/>
    </location>
</feature>
<feature type="helix" evidence="16">
    <location>
        <begin position="200"/>
        <end position="203"/>
    </location>
</feature>
<feature type="strand" evidence="16">
    <location>
        <begin position="204"/>
        <end position="210"/>
    </location>
</feature>
<feature type="helix" evidence="16">
    <location>
        <begin position="219"/>
        <end position="222"/>
    </location>
</feature>
<feature type="helix" evidence="16">
    <location>
        <begin position="224"/>
        <end position="230"/>
    </location>
</feature>
<feature type="helix" evidence="16">
    <location>
        <begin position="235"/>
        <end position="237"/>
    </location>
</feature>
<feature type="strand" evidence="16">
    <location>
        <begin position="240"/>
        <end position="247"/>
    </location>
</feature>
<feature type="strand" evidence="16">
    <location>
        <begin position="255"/>
        <end position="262"/>
    </location>
</feature>
<feature type="helix" evidence="16">
    <location>
        <begin position="266"/>
        <end position="279"/>
    </location>
</feature>
<feature type="helix" evidence="16">
    <location>
        <begin position="280"/>
        <end position="282"/>
    </location>
</feature>
<feature type="strand" evidence="16">
    <location>
        <begin position="287"/>
        <end position="297"/>
    </location>
</feature>
<feature type="strand" evidence="16">
    <location>
        <begin position="308"/>
        <end position="319"/>
    </location>
</feature>
<feature type="helix" evidence="16">
    <location>
        <begin position="321"/>
        <end position="331"/>
    </location>
</feature>
<feature type="helix" evidence="16">
    <location>
        <begin position="333"/>
        <end position="335"/>
    </location>
</feature>
<feature type="helix" evidence="16">
    <location>
        <begin position="339"/>
        <end position="341"/>
    </location>
</feature>
<feature type="strand" evidence="16">
    <location>
        <begin position="342"/>
        <end position="345"/>
    </location>
</feature>
<feature type="helix" evidence="16">
    <location>
        <begin position="347"/>
        <end position="353"/>
    </location>
</feature>
<feature type="strand" evidence="16">
    <location>
        <begin position="355"/>
        <end position="357"/>
    </location>
</feature>
<feature type="helix" evidence="16">
    <location>
        <begin position="367"/>
        <end position="371"/>
    </location>
</feature>
<feature type="strand" evidence="16">
    <location>
        <begin position="379"/>
        <end position="390"/>
    </location>
</feature>
<feature type="helix" evidence="16">
    <location>
        <begin position="394"/>
        <end position="402"/>
    </location>
</feature>
<feature type="helix" evidence="16">
    <location>
        <begin position="403"/>
        <end position="406"/>
    </location>
</feature>
<feature type="turn" evidence="16">
    <location>
        <begin position="409"/>
        <end position="411"/>
    </location>
</feature>
<feature type="strand" evidence="16">
    <location>
        <begin position="412"/>
        <end position="418"/>
    </location>
</feature>
<feature type="helix" evidence="16">
    <location>
        <begin position="421"/>
        <end position="424"/>
    </location>
</feature>
<feature type="strand" evidence="16">
    <location>
        <begin position="430"/>
        <end position="432"/>
    </location>
</feature>
<feature type="strand" evidence="16">
    <location>
        <begin position="441"/>
        <end position="449"/>
    </location>
</feature>
<feature type="turn" evidence="16">
    <location>
        <begin position="452"/>
        <end position="454"/>
    </location>
</feature>
<feature type="helix" evidence="16">
    <location>
        <begin position="455"/>
        <end position="468"/>
    </location>
</feature>
<feature type="helix" evidence="16">
    <location>
        <begin position="470"/>
        <end position="472"/>
    </location>
</feature>
<feature type="helix" evidence="16">
    <location>
        <begin position="487"/>
        <end position="489"/>
    </location>
</feature>
<feature type="helix" evidence="16">
    <location>
        <begin position="500"/>
        <end position="510"/>
    </location>
</feature>
<feature type="helix" evidence="16">
    <location>
        <begin position="515"/>
        <end position="525"/>
    </location>
</feature>
<dbReference type="EC" id="1.21.3.7" evidence="4 7 9"/>
<dbReference type="EMBL" id="AB057805">
    <property type="protein sequence ID" value="BAC41356.1"/>
    <property type="molecule type" value="mRNA"/>
</dbReference>
<dbReference type="EMBL" id="AB212829">
    <property type="protein sequence ID" value="BAE48241.1"/>
    <property type="molecule type" value="Genomic_DNA"/>
</dbReference>
<dbReference type="EMBL" id="AB212832">
    <property type="protein sequence ID" value="BAE48244.1"/>
    <property type="molecule type" value="Genomic_DNA"/>
</dbReference>
<dbReference type="EMBL" id="AB212834">
    <property type="protein sequence ID" value="BAE48246.1"/>
    <property type="molecule type" value="Genomic_DNA"/>
</dbReference>
<dbReference type="EMBL" id="AB212835">
    <property type="protein sequence ID" value="BAE48247.1"/>
    <property type="molecule type" value="Genomic_DNA"/>
</dbReference>
<dbReference type="EMBL" id="AB212837">
    <property type="protein sequence ID" value="BAE48249.1"/>
    <property type="molecule type" value="Genomic_DNA"/>
</dbReference>
<dbReference type="EMBL" id="AB212838">
    <property type="protein sequence ID" value="BAE48250.1"/>
    <property type="molecule type" value="Genomic_DNA"/>
</dbReference>
<dbReference type="EMBL" id="AB183698">
    <property type="protein sequence ID" value="BAD82947.1"/>
    <property type="molecule type" value="Genomic_DNA"/>
</dbReference>
<dbReference type="EMBL" id="AB183699">
    <property type="protein sequence ID" value="BAD82948.1"/>
    <property type="molecule type" value="Genomic_DNA"/>
</dbReference>
<dbReference type="EMBL" id="AB183700">
    <property type="protein sequence ID" value="BAD82949.1"/>
    <property type="molecule type" value="Genomic_DNA"/>
</dbReference>
<dbReference type="EMBL" id="AB183701">
    <property type="protein sequence ID" value="BAD82950.1"/>
    <property type="molecule type" value="Genomic_DNA"/>
</dbReference>
<dbReference type="EMBL" id="AB183702">
    <property type="protein sequence ID" value="BAD82951.1"/>
    <property type="molecule type" value="Genomic_DNA"/>
</dbReference>
<dbReference type="EMBL" id="AB183703">
    <property type="protein sequence ID" value="BAD82952.1"/>
    <property type="molecule type" value="Genomic_DNA"/>
</dbReference>
<dbReference type="EMBL" id="AB183704">
    <property type="protein sequence ID" value="BAD82953.1"/>
    <property type="molecule type" value="Genomic_DNA"/>
</dbReference>
<dbReference type="EMBL" id="AB183705">
    <property type="protein sequence ID" value="BAD82954.1"/>
    <property type="molecule type" value="Genomic_DNA"/>
</dbReference>
<dbReference type="PDB" id="3VTE">
    <property type="method" value="X-ray"/>
    <property type="resolution" value="2.75 A"/>
    <property type="chains" value="A=28-545"/>
</dbReference>
<dbReference type="PDBsum" id="3VTE"/>
<dbReference type="SMR" id="Q8GTB6"/>
<dbReference type="GlyCosmos" id="Q8GTB6">
    <property type="glycosylation" value="8 sites, No reported glycans"/>
</dbReference>
<dbReference type="iPTMnet" id="Q8GTB6"/>
<dbReference type="KEGG" id="ag:BAC41356"/>
<dbReference type="BioCyc" id="MetaCyc:MONOMER-12033"/>
<dbReference type="BRENDA" id="1.21.3.7">
    <property type="organism ID" value="1159"/>
</dbReference>
<dbReference type="UniPathway" id="UPA00213"/>
<dbReference type="EvolutionaryTrace" id="Q8GTB6"/>
<dbReference type="Proteomes" id="UP000596661">
    <property type="component" value="Unplaced"/>
</dbReference>
<dbReference type="GO" id="GO:0048046">
    <property type="term" value="C:apoplast"/>
    <property type="evidence" value="ECO:0007669"/>
    <property type="project" value="UniProtKB-SubCell"/>
</dbReference>
<dbReference type="GO" id="GO:0102778">
    <property type="term" value="F:delta9-tetrahydrocannabinolate synthase activity"/>
    <property type="evidence" value="ECO:0007669"/>
    <property type="project" value="UniProtKB-EC"/>
</dbReference>
<dbReference type="GO" id="GO:0071949">
    <property type="term" value="F:FAD binding"/>
    <property type="evidence" value="ECO:0007669"/>
    <property type="project" value="InterPro"/>
</dbReference>
<dbReference type="GO" id="GO:1901696">
    <property type="term" value="P:cannabinoid biosynthetic process"/>
    <property type="evidence" value="ECO:0000304"/>
    <property type="project" value="UniProtKB"/>
</dbReference>
<dbReference type="GO" id="GO:0016114">
    <property type="term" value="P:terpenoid biosynthetic process"/>
    <property type="evidence" value="ECO:0007669"/>
    <property type="project" value="UniProtKB-UniPathway"/>
</dbReference>
<dbReference type="FunFam" id="3.30.43.10:FF:000004">
    <property type="entry name" value="Berberine bridge enzyme-like 15"/>
    <property type="match status" value="1"/>
</dbReference>
<dbReference type="Gene3D" id="3.30.465.10">
    <property type="match status" value="1"/>
</dbReference>
<dbReference type="Gene3D" id="3.40.462.20">
    <property type="match status" value="1"/>
</dbReference>
<dbReference type="Gene3D" id="3.30.43.10">
    <property type="entry name" value="Uridine Diphospho-n-acetylenolpyruvylglucosamine Reductase, domain 2"/>
    <property type="match status" value="1"/>
</dbReference>
<dbReference type="InterPro" id="IPR012951">
    <property type="entry name" value="BBE"/>
</dbReference>
<dbReference type="InterPro" id="IPR016166">
    <property type="entry name" value="FAD-bd_PCMH"/>
</dbReference>
<dbReference type="InterPro" id="IPR036318">
    <property type="entry name" value="FAD-bd_PCMH-like_sf"/>
</dbReference>
<dbReference type="InterPro" id="IPR016167">
    <property type="entry name" value="FAD-bd_PCMH_sub1"/>
</dbReference>
<dbReference type="InterPro" id="IPR016169">
    <property type="entry name" value="FAD-bd_PCMH_sub2"/>
</dbReference>
<dbReference type="InterPro" id="IPR006094">
    <property type="entry name" value="Oxid_FAD_bind_N"/>
</dbReference>
<dbReference type="PANTHER" id="PTHR32448">
    <property type="entry name" value="OS08G0158400 PROTEIN"/>
    <property type="match status" value="1"/>
</dbReference>
<dbReference type="Pfam" id="PF08031">
    <property type="entry name" value="BBE"/>
    <property type="match status" value="1"/>
</dbReference>
<dbReference type="Pfam" id="PF01565">
    <property type="entry name" value="FAD_binding_4"/>
    <property type="match status" value="1"/>
</dbReference>
<dbReference type="SUPFAM" id="SSF56176">
    <property type="entry name" value="FAD-binding/transporter-associated domain-like"/>
    <property type="match status" value="1"/>
</dbReference>
<dbReference type="PROSITE" id="PS51387">
    <property type="entry name" value="FAD_PCMH"/>
    <property type="match status" value="1"/>
</dbReference>
<protein>
    <recommendedName>
        <fullName evidence="12">Tetrahydrocannabinolic acid synthase</fullName>
        <shortName evidence="12">THCA synthase</shortName>
        <ecNumber evidence="4 7 9">1.21.3.7</ecNumber>
    </recommendedName>
    <alternativeName>
        <fullName evidence="10">Delta(1)-tetrahydrocannabinolic acid synthase</fullName>
    </alternativeName>
</protein>
<evidence type="ECO:0000250" key="1">
    <source>
        <dbReference type="UniProtKB" id="G2QG48"/>
    </source>
</evidence>
<evidence type="ECO:0000255" key="2">
    <source>
        <dbReference type="PROSITE-ProRule" id="PRU00498"/>
    </source>
</evidence>
<evidence type="ECO:0000255" key="3">
    <source>
        <dbReference type="PROSITE-ProRule" id="PRU00718"/>
    </source>
</evidence>
<evidence type="ECO:0000269" key="4">
    <source>
    </source>
</evidence>
<evidence type="ECO:0000269" key="5">
    <source>
    </source>
</evidence>
<evidence type="ECO:0000269" key="6">
    <source>
    </source>
</evidence>
<evidence type="ECO:0000269" key="7">
    <source>
    </source>
</evidence>
<evidence type="ECO:0000269" key="8">
    <source>
    </source>
</evidence>
<evidence type="ECO:0000269" key="9">
    <source ref="4"/>
</evidence>
<evidence type="ECO:0000303" key="10">
    <source>
    </source>
</evidence>
<evidence type="ECO:0000303" key="11">
    <source>
    </source>
</evidence>
<evidence type="ECO:0000303" key="12">
    <source ref="4"/>
</evidence>
<evidence type="ECO:0000305" key="13"/>
<evidence type="ECO:0000305" key="14">
    <source>
    </source>
</evidence>
<evidence type="ECO:0007744" key="15">
    <source>
        <dbReference type="PDB" id="3VTE"/>
    </source>
</evidence>
<evidence type="ECO:0007829" key="16">
    <source>
        <dbReference type="PDB" id="3VTE"/>
    </source>
</evidence>
<keyword id="KW-0002">3D-structure</keyword>
<keyword id="KW-0052">Apoplast</keyword>
<keyword id="KW-0903">Direct protein sequencing</keyword>
<keyword id="KW-1015">Disulfide bond</keyword>
<keyword id="KW-0274">FAD</keyword>
<keyword id="KW-0285">Flavoprotein</keyword>
<keyword id="KW-0325">Glycoprotein</keyword>
<keyword id="KW-0560">Oxidoreductase</keyword>
<keyword id="KW-0964">Secreted</keyword>
<keyword id="KW-0732">Signal</keyword>
<sequence length="545" mass="61927">MNCSAFSFWFVCKIIFFFLSFHIQISIANPRENFLKCFSKHIPNNVANPKLVYTQHDQLYMSILNSTIQNLRFISDTTPKPLVIVTPSNNSHIQATILCSKKVGLQIRTRSGGHDAEGMSYISQVPFVVVDLRNMHSIKIDVHSQTAWVEAGATLGEVYYWINEKNENLSFPGGYCPTVGVGGHFSGGGYGALMRNYGLAADNIIDAHLVNVDGKVLDRKSMGEDLFWAIRGGGGENFGIIAAWKIKLVAVPSKSTIFSVKKNMEIHGLVKLFNKWQNIAYKYDKDLVLMTHFITKNITDNHGKNKTTVHGYFSSIFHGGVDSLVDLMNKSFPELGIKKTDCKEFSWIDTTIFYSGVVNFNTANFKKEILLDRSAGKKTAFSIKLDYVKKPIPETAMVKILEKLYEEDVGAGMYVLYPYGGIMEEISESAIPFPHRAGIMYELWYTASWEKQEDNEKHINWVRSVYNFTTPYVSQNPRLAYLNYRDLDLGKTNHASPNNYTQARIWGEKYFGKNFNRLVKVKTKVDPNNFFRNEQSIPPLPPHHH</sequence>